<organism>
    <name type="scientific">Dechloromonas aromatica (strain RCB)</name>
    <dbReference type="NCBI Taxonomy" id="159087"/>
    <lineage>
        <taxon>Bacteria</taxon>
        <taxon>Pseudomonadati</taxon>
        <taxon>Pseudomonadota</taxon>
        <taxon>Betaproteobacteria</taxon>
        <taxon>Rhodocyclales</taxon>
        <taxon>Azonexaceae</taxon>
        <taxon>Dechloromonas</taxon>
    </lineage>
</organism>
<sequence>MDDNKAKALAAALQQIEKQFGKGSIMKMGDAEIDEGIQVVSTGSLGLDIALGVGGLPRGRVVEIYGPESSGKTTLCLQVVAEMQKLGGVAAFIDAEHALDPQYAQKLGVNVGDLLISQPDTGEQALEIADMLVRSGSVDIIVVDSVAALTPRAEIEGEMGDQMVGLHARLMSQALRKLTANIKKTNTLVIFINQIRMKIGVMFGSPETTTGGNALKFYASVRLDIRRIGAIKKGDEVIGSETKVKVVKNKVAPPFREAIFDILYGEGISRQGEIVEMGVAHKLVDKSGAWYAYKGEKIGQGKDNAREFLKANPEIAQEIEAGIREAASTNVIKPVKAAKAADA</sequence>
<name>RECA_DECAR</name>
<accession>Q477V3</accession>
<comment type="function">
    <text evidence="1">Can catalyze the hydrolysis of ATP in the presence of single-stranded DNA, the ATP-dependent uptake of single-stranded DNA by duplex DNA, and the ATP-dependent hybridization of homologous single-stranded DNAs. It interacts with LexA causing its activation and leading to its autocatalytic cleavage.</text>
</comment>
<comment type="subcellular location">
    <subcellularLocation>
        <location evidence="1">Cytoplasm</location>
    </subcellularLocation>
</comment>
<comment type="similarity">
    <text evidence="1">Belongs to the RecA family.</text>
</comment>
<reference key="1">
    <citation type="journal article" date="2009" name="BMC Genomics">
        <title>Metabolic analysis of the soil microbe Dechloromonas aromatica str. RCB: indications of a surprisingly complex life-style and cryptic anaerobic pathways for aromatic degradation.</title>
        <authorList>
            <person name="Salinero K.K."/>
            <person name="Keller K."/>
            <person name="Feil W.S."/>
            <person name="Feil H."/>
            <person name="Trong S."/>
            <person name="Di Bartolo G."/>
            <person name="Lapidus A."/>
        </authorList>
    </citation>
    <scope>NUCLEOTIDE SEQUENCE [LARGE SCALE GENOMIC DNA]</scope>
    <source>
        <strain>RCB</strain>
    </source>
</reference>
<protein>
    <recommendedName>
        <fullName evidence="1">Protein RecA</fullName>
    </recommendedName>
    <alternativeName>
        <fullName evidence="1">Recombinase A</fullName>
    </alternativeName>
</protein>
<proteinExistence type="inferred from homology"/>
<dbReference type="EMBL" id="CP000089">
    <property type="protein sequence ID" value="AAZ48878.1"/>
    <property type="molecule type" value="Genomic_DNA"/>
</dbReference>
<dbReference type="SMR" id="Q477V3"/>
<dbReference type="STRING" id="159087.Daro_4152"/>
<dbReference type="KEGG" id="dar:Daro_4152"/>
<dbReference type="eggNOG" id="COG0468">
    <property type="taxonomic scope" value="Bacteria"/>
</dbReference>
<dbReference type="HOGENOM" id="CLU_040469_3_2_4"/>
<dbReference type="OrthoDB" id="9776733at2"/>
<dbReference type="GO" id="GO:0005829">
    <property type="term" value="C:cytosol"/>
    <property type="evidence" value="ECO:0007669"/>
    <property type="project" value="TreeGrafter"/>
</dbReference>
<dbReference type="GO" id="GO:0005524">
    <property type="term" value="F:ATP binding"/>
    <property type="evidence" value="ECO:0007669"/>
    <property type="project" value="UniProtKB-UniRule"/>
</dbReference>
<dbReference type="GO" id="GO:0016887">
    <property type="term" value="F:ATP hydrolysis activity"/>
    <property type="evidence" value="ECO:0007669"/>
    <property type="project" value="InterPro"/>
</dbReference>
<dbReference type="GO" id="GO:0140664">
    <property type="term" value="F:ATP-dependent DNA damage sensor activity"/>
    <property type="evidence" value="ECO:0007669"/>
    <property type="project" value="InterPro"/>
</dbReference>
<dbReference type="GO" id="GO:0003684">
    <property type="term" value="F:damaged DNA binding"/>
    <property type="evidence" value="ECO:0007669"/>
    <property type="project" value="UniProtKB-UniRule"/>
</dbReference>
<dbReference type="GO" id="GO:0003697">
    <property type="term" value="F:single-stranded DNA binding"/>
    <property type="evidence" value="ECO:0007669"/>
    <property type="project" value="UniProtKB-UniRule"/>
</dbReference>
<dbReference type="GO" id="GO:0006310">
    <property type="term" value="P:DNA recombination"/>
    <property type="evidence" value="ECO:0007669"/>
    <property type="project" value="UniProtKB-UniRule"/>
</dbReference>
<dbReference type="GO" id="GO:0006281">
    <property type="term" value="P:DNA repair"/>
    <property type="evidence" value="ECO:0007669"/>
    <property type="project" value="UniProtKB-UniRule"/>
</dbReference>
<dbReference type="GO" id="GO:0009432">
    <property type="term" value="P:SOS response"/>
    <property type="evidence" value="ECO:0007669"/>
    <property type="project" value="UniProtKB-UniRule"/>
</dbReference>
<dbReference type="CDD" id="cd00983">
    <property type="entry name" value="RecA"/>
    <property type="match status" value="1"/>
</dbReference>
<dbReference type="FunFam" id="3.40.50.300:FF:000087">
    <property type="entry name" value="Recombinase RecA"/>
    <property type="match status" value="1"/>
</dbReference>
<dbReference type="Gene3D" id="3.40.50.300">
    <property type="entry name" value="P-loop containing nucleotide triphosphate hydrolases"/>
    <property type="match status" value="1"/>
</dbReference>
<dbReference type="HAMAP" id="MF_00268">
    <property type="entry name" value="RecA"/>
    <property type="match status" value="1"/>
</dbReference>
<dbReference type="InterPro" id="IPR003593">
    <property type="entry name" value="AAA+_ATPase"/>
</dbReference>
<dbReference type="InterPro" id="IPR013765">
    <property type="entry name" value="DNA_recomb/repair_RecA"/>
</dbReference>
<dbReference type="InterPro" id="IPR020584">
    <property type="entry name" value="DNA_recomb/repair_RecA_CS"/>
</dbReference>
<dbReference type="InterPro" id="IPR027417">
    <property type="entry name" value="P-loop_NTPase"/>
</dbReference>
<dbReference type="InterPro" id="IPR049261">
    <property type="entry name" value="RecA-like_C"/>
</dbReference>
<dbReference type="InterPro" id="IPR049428">
    <property type="entry name" value="RecA-like_N"/>
</dbReference>
<dbReference type="InterPro" id="IPR020588">
    <property type="entry name" value="RecA_ATP-bd"/>
</dbReference>
<dbReference type="InterPro" id="IPR023400">
    <property type="entry name" value="RecA_C_sf"/>
</dbReference>
<dbReference type="InterPro" id="IPR020587">
    <property type="entry name" value="RecA_monomer-monomer_interface"/>
</dbReference>
<dbReference type="NCBIfam" id="TIGR02012">
    <property type="entry name" value="tigrfam_recA"/>
    <property type="match status" value="1"/>
</dbReference>
<dbReference type="PANTHER" id="PTHR45900:SF1">
    <property type="entry name" value="MITOCHONDRIAL DNA REPAIR PROTEIN RECA HOMOLOG-RELATED"/>
    <property type="match status" value="1"/>
</dbReference>
<dbReference type="PANTHER" id="PTHR45900">
    <property type="entry name" value="RECA"/>
    <property type="match status" value="1"/>
</dbReference>
<dbReference type="Pfam" id="PF00154">
    <property type="entry name" value="RecA"/>
    <property type="match status" value="1"/>
</dbReference>
<dbReference type="Pfam" id="PF21096">
    <property type="entry name" value="RecA_C"/>
    <property type="match status" value="1"/>
</dbReference>
<dbReference type="PRINTS" id="PR00142">
    <property type="entry name" value="RECA"/>
</dbReference>
<dbReference type="SMART" id="SM00382">
    <property type="entry name" value="AAA"/>
    <property type="match status" value="1"/>
</dbReference>
<dbReference type="SUPFAM" id="SSF52540">
    <property type="entry name" value="P-loop containing nucleoside triphosphate hydrolases"/>
    <property type="match status" value="1"/>
</dbReference>
<dbReference type="SUPFAM" id="SSF54752">
    <property type="entry name" value="RecA protein, C-terminal domain"/>
    <property type="match status" value="1"/>
</dbReference>
<dbReference type="PROSITE" id="PS00321">
    <property type="entry name" value="RECA_1"/>
    <property type="match status" value="1"/>
</dbReference>
<dbReference type="PROSITE" id="PS50162">
    <property type="entry name" value="RECA_2"/>
    <property type="match status" value="1"/>
</dbReference>
<dbReference type="PROSITE" id="PS50163">
    <property type="entry name" value="RECA_3"/>
    <property type="match status" value="1"/>
</dbReference>
<keyword id="KW-0067">ATP-binding</keyword>
<keyword id="KW-0963">Cytoplasm</keyword>
<keyword id="KW-0227">DNA damage</keyword>
<keyword id="KW-0233">DNA recombination</keyword>
<keyword id="KW-0234">DNA repair</keyword>
<keyword id="KW-0238">DNA-binding</keyword>
<keyword id="KW-0547">Nucleotide-binding</keyword>
<keyword id="KW-0742">SOS response</keyword>
<evidence type="ECO:0000255" key="1">
    <source>
        <dbReference type="HAMAP-Rule" id="MF_00268"/>
    </source>
</evidence>
<feature type="chain" id="PRO_1000047908" description="Protein RecA">
    <location>
        <begin position="1"/>
        <end position="343"/>
    </location>
</feature>
<feature type="binding site" evidence="1">
    <location>
        <begin position="66"/>
        <end position="73"/>
    </location>
    <ligand>
        <name>ATP</name>
        <dbReference type="ChEBI" id="CHEBI:30616"/>
    </ligand>
</feature>
<gene>
    <name evidence="1" type="primary">recA</name>
    <name type="ordered locus">Daro_4152</name>
</gene>